<gene>
    <name type="primary">ASCL2</name>
    <name type="synonym">MASH2</name>
</gene>
<comment type="function">
    <text evidence="1 2">Transcription factor. Binds to E-box motifs 5'-CANNTG-3' in the regulatory elements of target genes, probably as a heterodimer with another basic helix-loop-helix (bHLH) protein such as the transcription factor TCF3. May bind both open and closed chromatin, acting as a pioneer transcription factor to allow other factors to bind and activate lineage-specific genes. Required during post-implantation development for the generation of some differentiated trophoblast cell types. Transcriptional activity of ASCL2 may be antagonised in a subset of trophoblast cells by bHLH transcription factor HAND1, perhaps by competing for dimerization with other bHLH proteins. Involved in differentiation and function of follicular T-helper (Tfh) cells, thereby playing a role in germinal center responses; probably modulates expression of genes involved in Tfh cell function, such as BCL6. May also act as a suppressor of Th1-, Th2- and Th17-cell differentiation. Induces the formation of stem cells in intestinal crypts in vitro, synergistically activating transcription of target genes, such as SOX9, together with TCF4/beta-catenin. May form a bistable transcriptional switch, controlling expression of its own gene together with Wnt/R-spondin signaling, and thereby maintaining stem cell characteristics (By similarity). Modulates expression of target genes, including perhaps down-regulating EGR1/Krox24 and chemokine CXCL10/Mob-1 and up-regulating CXCR4 and CDKN1C/p57kip2, in Schwann cells. May play a role in reducing proliferation of Schwann cells, perhaps acting via modulation of expression of CDKN1C (By similarity). May be dispensable for blastocyst formation and later embryonic function (By similarity). May be involved in the determination of neuronal precursors (By similarity).</text>
</comment>
<comment type="subunit">
    <text evidence="1">Efficient DNA binding requires dimerization with another basic helix-loop-helix (bHLH) protein. Forms heterodimers with bHLH transcription factor TCF3. May not heterodimerise with bHLH protein HAND1.</text>
</comment>
<comment type="subcellular location">
    <subcellularLocation>
        <location evidence="2">Nucleus</location>
    </subcellularLocation>
</comment>
<comment type="tissue specificity">
    <text evidence="5">Expressed in placenta.</text>
</comment>
<accession>Q2EGB9</accession>
<accession>Q2PJC0</accession>
<sequence length="193" mass="20264">MDSRALPRPAPPAPGVPGCCAARRRPESPELLRCSRRRRPGAVDPGSGAAAVARRNERERNRVKLVNLGFQALRQHVPHGGASKKLSKVETLRSAVEYIRALQRLLAEHDAVRAALAGGLLAPAVRHPLPRAPSGTPATAASPSCASSSPGRGHSSEPGSPRSAYSSDDSGCEGALSPAERELLDFSSWLGGY</sequence>
<protein>
    <recommendedName>
        <fullName>Achaete-scute homolog 2</fullName>
    </recommendedName>
    <alternativeName>
        <fullName>Mash2</fullName>
    </alternativeName>
</protein>
<dbReference type="EMBL" id="DQ333219">
    <property type="protein sequence ID" value="ABC49786.1"/>
    <property type="molecule type" value="mRNA"/>
</dbReference>
<dbReference type="EMBL" id="DQ381723">
    <property type="protein sequence ID" value="ABD39719.1"/>
    <property type="molecule type" value="Genomic_DNA"/>
</dbReference>
<dbReference type="EMBL" id="BC116068">
    <property type="protein sequence ID" value="AAI16069.1"/>
    <property type="molecule type" value="mRNA"/>
</dbReference>
<dbReference type="RefSeq" id="NP_001035697.1">
    <property type="nucleotide sequence ID" value="NM_001040607.1"/>
</dbReference>
<dbReference type="SMR" id="Q2EGB9"/>
<dbReference type="FunCoup" id="Q2EGB9">
    <property type="interactions" value="15"/>
</dbReference>
<dbReference type="STRING" id="9913.ENSBTAP00000038051"/>
<dbReference type="PaxDb" id="9913-ENSBTAP00000038051"/>
<dbReference type="Ensembl" id="ENSBTAT00000038236.5">
    <property type="protein sequence ID" value="ENSBTAP00000038051.3"/>
    <property type="gene ID" value="ENSBTAG00000026769.5"/>
</dbReference>
<dbReference type="GeneID" id="664650"/>
<dbReference type="KEGG" id="bta:664650"/>
<dbReference type="CTD" id="430"/>
<dbReference type="VEuPathDB" id="HostDB:ENSBTAG00000026769"/>
<dbReference type="VGNC" id="VGNC:26207">
    <property type="gene designation" value="ASCL2"/>
</dbReference>
<dbReference type="eggNOG" id="KOG4029">
    <property type="taxonomic scope" value="Eukaryota"/>
</dbReference>
<dbReference type="GeneTree" id="ENSGT00940000163041"/>
<dbReference type="HOGENOM" id="CLU_063523_2_0_1"/>
<dbReference type="InParanoid" id="Q2EGB9"/>
<dbReference type="OMA" id="ACPRESC"/>
<dbReference type="OrthoDB" id="5976910at2759"/>
<dbReference type="TreeFam" id="TF322889"/>
<dbReference type="Proteomes" id="UP000009136">
    <property type="component" value="Chromosome 29"/>
</dbReference>
<dbReference type="Bgee" id="ENSBTAG00000026769">
    <property type="expression patterns" value="Expressed in conceptus and 58 other cell types or tissues"/>
</dbReference>
<dbReference type="GO" id="GO:0005737">
    <property type="term" value="C:cytoplasm"/>
    <property type="evidence" value="ECO:0007669"/>
    <property type="project" value="Ensembl"/>
</dbReference>
<dbReference type="GO" id="GO:0090575">
    <property type="term" value="C:RNA polymerase II transcription regulator complex"/>
    <property type="evidence" value="ECO:0000318"/>
    <property type="project" value="GO_Central"/>
</dbReference>
<dbReference type="GO" id="GO:0043425">
    <property type="term" value="F:bHLH transcription factor binding"/>
    <property type="evidence" value="ECO:0007669"/>
    <property type="project" value="Ensembl"/>
</dbReference>
<dbReference type="GO" id="GO:0001228">
    <property type="term" value="F:DNA-binding transcription activator activity, RNA polymerase II-specific"/>
    <property type="evidence" value="ECO:0007669"/>
    <property type="project" value="Ensembl"/>
</dbReference>
<dbReference type="GO" id="GO:0000981">
    <property type="term" value="F:DNA-binding transcription factor activity, RNA polymerase II-specific"/>
    <property type="evidence" value="ECO:0000318"/>
    <property type="project" value="GO_Central"/>
</dbReference>
<dbReference type="GO" id="GO:0001227">
    <property type="term" value="F:DNA-binding transcription repressor activity, RNA polymerase II-specific"/>
    <property type="evidence" value="ECO:0007669"/>
    <property type="project" value="Ensembl"/>
</dbReference>
<dbReference type="GO" id="GO:0070888">
    <property type="term" value="F:E-box binding"/>
    <property type="evidence" value="ECO:0007669"/>
    <property type="project" value="Ensembl"/>
</dbReference>
<dbReference type="GO" id="GO:0046983">
    <property type="term" value="F:protein dimerization activity"/>
    <property type="evidence" value="ECO:0007669"/>
    <property type="project" value="InterPro"/>
</dbReference>
<dbReference type="GO" id="GO:0000977">
    <property type="term" value="F:RNA polymerase II transcription regulatory region sequence-specific DNA binding"/>
    <property type="evidence" value="ECO:0000318"/>
    <property type="project" value="GO_Central"/>
</dbReference>
<dbReference type="GO" id="GO:0060719">
    <property type="term" value="P:chorionic trophoblast cell development"/>
    <property type="evidence" value="ECO:0007669"/>
    <property type="project" value="Ensembl"/>
</dbReference>
<dbReference type="GO" id="GO:0001701">
    <property type="term" value="P:in utero embryonic development"/>
    <property type="evidence" value="ECO:0007669"/>
    <property type="project" value="Ensembl"/>
</dbReference>
<dbReference type="GO" id="GO:0045626">
    <property type="term" value="P:negative regulation of T-helper 1 cell differentiation"/>
    <property type="evidence" value="ECO:0007669"/>
    <property type="project" value="Ensembl"/>
</dbReference>
<dbReference type="GO" id="GO:2000320">
    <property type="term" value="P:negative regulation of T-helper 17 cell differentiation"/>
    <property type="evidence" value="ECO:0007669"/>
    <property type="project" value="Ensembl"/>
</dbReference>
<dbReference type="GO" id="GO:0045629">
    <property type="term" value="P:negative regulation of T-helper 2 cell differentiation"/>
    <property type="evidence" value="ECO:0007669"/>
    <property type="project" value="Ensembl"/>
</dbReference>
<dbReference type="GO" id="GO:0030182">
    <property type="term" value="P:neuron differentiation"/>
    <property type="evidence" value="ECO:0000318"/>
    <property type="project" value="GO_Central"/>
</dbReference>
<dbReference type="GO" id="GO:0001890">
    <property type="term" value="P:placenta development"/>
    <property type="evidence" value="ECO:0007669"/>
    <property type="project" value="Ensembl"/>
</dbReference>
<dbReference type="GO" id="GO:2000406">
    <property type="term" value="P:positive regulation of T cell migration"/>
    <property type="evidence" value="ECO:0007669"/>
    <property type="project" value="Ensembl"/>
</dbReference>
<dbReference type="GO" id="GO:0045944">
    <property type="term" value="P:positive regulation of transcription by RNA polymerase II"/>
    <property type="evidence" value="ECO:0000318"/>
    <property type="project" value="GO_Central"/>
</dbReference>
<dbReference type="GO" id="GO:0050767">
    <property type="term" value="P:regulation of neurogenesis"/>
    <property type="evidence" value="ECO:0000318"/>
    <property type="project" value="GO_Central"/>
</dbReference>
<dbReference type="GO" id="GO:0001666">
    <property type="term" value="P:response to hypoxia"/>
    <property type="evidence" value="ECO:0007669"/>
    <property type="project" value="Ensembl"/>
</dbReference>
<dbReference type="GO" id="GO:0007423">
    <property type="term" value="P:sensory organ development"/>
    <property type="evidence" value="ECO:0000318"/>
    <property type="project" value="GO_Central"/>
</dbReference>
<dbReference type="GO" id="GO:0035019">
    <property type="term" value="P:somatic stem cell population maintenance"/>
    <property type="evidence" value="ECO:0007669"/>
    <property type="project" value="Ensembl"/>
</dbReference>
<dbReference type="GO" id="GO:0061470">
    <property type="term" value="P:T follicular helper cell differentiation"/>
    <property type="evidence" value="ECO:0007669"/>
    <property type="project" value="Ensembl"/>
</dbReference>
<dbReference type="CDD" id="cd19743">
    <property type="entry name" value="bHLH_TS_ASCL2_Mash2"/>
    <property type="match status" value="1"/>
</dbReference>
<dbReference type="FunFam" id="4.10.280.10:FF:000029">
    <property type="entry name" value="Achaete-scute family bHLH transcription factor 1"/>
    <property type="match status" value="1"/>
</dbReference>
<dbReference type="Gene3D" id="4.10.280.10">
    <property type="entry name" value="Helix-loop-helix DNA-binding domain"/>
    <property type="match status" value="1"/>
</dbReference>
<dbReference type="InterPro" id="IPR011598">
    <property type="entry name" value="bHLH_dom"/>
</dbReference>
<dbReference type="InterPro" id="IPR036638">
    <property type="entry name" value="HLH_DNA-bd_sf"/>
</dbReference>
<dbReference type="InterPro" id="IPR015660">
    <property type="entry name" value="MASH1/Ascl1a-like"/>
</dbReference>
<dbReference type="PANTHER" id="PTHR13935:SF62">
    <property type="entry name" value="ACHAETE-SCUTE HOMOLOG 2"/>
    <property type="match status" value="1"/>
</dbReference>
<dbReference type="PANTHER" id="PTHR13935">
    <property type="entry name" value="ACHAETE-SCUTE TRANSCRIPTION FACTOR-RELATED"/>
    <property type="match status" value="1"/>
</dbReference>
<dbReference type="Pfam" id="PF00010">
    <property type="entry name" value="HLH"/>
    <property type="match status" value="1"/>
</dbReference>
<dbReference type="SMART" id="SM00353">
    <property type="entry name" value="HLH"/>
    <property type="match status" value="1"/>
</dbReference>
<dbReference type="SUPFAM" id="SSF47459">
    <property type="entry name" value="HLH, helix-loop-helix DNA-binding domain"/>
    <property type="match status" value="1"/>
</dbReference>
<dbReference type="PROSITE" id="PS50888">
    <property type="entry name" value="BHLH"/>
    <property type="match status" value="1"/>
</dbReference>
<keyword id="KW-0217">Developmental protein</keyword>
<keyword id="KW-0221">Differentiation</keyword>
<keyword id="KW-0238">DNA-binding</keyword>
<keyword id="KW-0524">Neurogenesis</keyword>
<keyword id="KW-0539">Nucleus</keyword>
<keyword id="KW-1185">Reference proteome</keyword>
<feature type="chain" id="PRO_0000247316" description="Achaete-scute homolog 2">
    <location>
        <begin position="1"/>
        <end position="193"/>
    </location>
</feature>
<feature type="domain" description="bHLH" evidence="3">
    <location>
        <begin position="50"/>
        <end position="102"/>
    </location>
</feature>
<feature type="region of interest" description="Disordered" evidence="4">
    <location>
        <begin position="1"/>
        <end position="58"/>
    </location>
</feature>
<feature type="region of interest" description="Disordered" evidence="4">
    <location>
        <begin position="128"/>
        <end position="177"/>
    </location>
</feature>
<feature type="compositionally biased region" description="Low complexity" evidence="4">
    <location>
        <begin position="128"/>
        <end position="152"/>
    </location>
</feature>
<feature type="sequence conflict" description="In Ref. 1; ABC49786." evidence="6" ref="1">
    <original>C</original>
    <variation>S</variation>
    <location>
        <position position="20"/>
    </location>
</feature>
<evidence type="ECO:0000250" key="1">
    <source>
        <dbReference type="UniProtKB" id="O35885"/>
    </source>
</evidence>
<evidence type="ECO:0000250" key="2">
    <source>
        <dbReference type="UniProtKB" id="P19360"/>
    </source>
</evidence>
<evidence type="ECO:0000255" key="3">
    <source>
        <dbReference type="PROSITE-ProRule" id="PRU00981"/>
    </source>
</evidence>
<evidence type="ECO:0000256" key="4">
    <source>
        <dbReference type="SAM" id="MobiDB-lite"/>
    </source>
</evidence>
<evidence type="ECO:0000269" key="5">
    <source>
    </source>
</evidence>
<evidence type="ECO:0000305" key="6"/>
<organism>
    <name type="scientific">Bos taurus</name>
    <name type="common">Bovine</name>
    <dbReference type="NCBI Taxonomy" id="9913"/>
    <lineage>
        <taxon>Eukaryota</taxon>
        <taxon>Metazoa</taxon>
        <taxon>Chordata</taxon>
        <taxon>Craniata</taxon>
        <taxon>Vertebrata</taxon>
        <taxon>Euteleostomi</taxon>
        <taxon>Mammalia</taxon>
        <taxon>Eutheria</taxon>
        <taxon>Laurasiatheria</taxon>
        <taxon>Artiodactyla</taxon>
        <taxon>Ruminantia</taxon>
        <taxon>Pecora</taxon>
        <taxon>Bovidae</taxon>
        <taxon>Bovinae</taxon>
        <taxon>Bos</taxon>
    </lineage>
</organism>
<name>ASCL2_BOVIN</name>
<reference key="1">
    <citation type="journal article" date="2006" name="Placenta">
        <title>Characterization of the placenta specific bovine mammalian achaete scute-like homologue 2 (Mash2) gene.</title>
        <authorList>
            <person name="Arnold D.R."/>
            <person name="Lefebvre R."/>
            <person name="Smith L.C."/>
        </authorList>
    </citation>
    <scope>NUCLEOTIDE SEQUENCE [GENOMIC DNA / MRNA]</scope>
    <scope>TISSUE SPECIFICITY</scope>
</reference>
<reference key="2">
    <citation type="submission" date="2006-05" db="EMBL/GenBank/DDBJ databases">
        <authorList>
            <consortium name="NIH - Mammalian Gene Collection (MGC) project"/>
        </authorList>
    </citation>
    <scope>NUCLEOTIDE SEQUENCE [LARGE SCALE MRNA]</scope>
    <source>
        <strain>Hereford</strain>
        <tissue>Ascending colon</tissue>
    </source>
</reference>
<proteinExistence type="evidence at transcript level"/>